<name>POLG_DEN2D</name>
<dbReference type="EMBL" id="U19778">
    <property type="protein sequence ID" value="AAA73471.1"/>
    <property type="molecule type" value="Genomic_RNA"/>
</dbReference>
<dbReference type="PIR" id="JC1007">
    <property type="entry name" value="GNWVD2"/>
</dbReference>
<dbReference type="SMR" id="P30026"/>
<dbReference type="GO" id="GO:0005576">
    <property type="term" value="C:extracellular region"/>
    <property type="evidence" value="ECO:0007669"/>
    <property type="project" value="UniProtKB-SubCell"/>
</dbReference>
<dbReference type="GO" id="GO:0044167">
    <property type="term" value="C:host cell endoplasmic reticulum membrane"/>
    <property type="evidence" value="ECO:0007669"/>
    <property type="project" value="UniProtKB-SubCell"/>
</dbReference>
<dbReference type="GO" id="GO:0042025">
    <property type="term" value="C:host cell nucleus"/>
    <property type="evidence" value="ECO:0007669"/>
    <property type="project" value="UniProtKB-SubCell"/>
</dbReference>
<dbReference type="GO" id="GO:0044220">
    <property type="term" value="C:host cell perinuclear region of cytoplasm"/>
    <property type="evidence" value="ECO:0007669"/>
    <property type="project" value="UniProtKB-SubCell"/>
</dbReference>
<dbReference type="GO" id="GO:0016020">
    <property type="term" value="C:membrane"/>
    <property type="evidence" value="ECO:0007669"/>
    <property type="project" value="UniProtKB-KW"/>
</dbReference>
<dbReference type="GO" id="GO:0019031">
    <property type="term" value="C:viral envelope"/>
    <property type="evidence" value="ECO:0007669"/>
    <property type="project" value="UniProtKB-KW"/>
</dbReference>
<dbReference type="GO" id="GO:0019013">
    <property type="term" value="C:viral nucleocapsid"/>
    <property type="evidence" value="ECO:0007669"/>
    <property type="project" value="UniProtKB-KW"/>
</dbReference>
<dbReference type="GO" id="GO:0055036">
    <property type="term" value="C:virion membrane"/>
    <property type="evidence" value="ECO:0007669"/>
    <property type="project" value="UniProtKB-SubCell"/>
</dbReference>
<dbReference type="GO" id="GO:0046983">
    <property type="term" value="F:protein dimerization activity"/>
    <property type="evidence" value="ECO:0007669"/>
    <property type="project" value="InterPro"/>
</dbReference>
<dbReference type="GO" id="GO:0005198">
    <property type="term" value="F:structural molecule activity"/>
    <property type="evidence" value="ECO:0007669"/>
    <property type="project" value="InterPro"/>
</dbReference>
<dbReference type="GO" id="GO:0075512">
    <property type="term" value="P:clathrin-dependent endocytosis of virus by host cell"/>
    <property type="evidence" value="ECO:0007669"/>
    <property type="project" value="UniProtKB-KW"/>
</dbReference>
<dbReference type="GO" id="GO:0039654">
    <property type="term" value="P:fusion of virus membrane with host endosome membrane"/>
    <property type="evidence" value="ECO:0007669"/>
    <property type="project" value="UniProtKB-KW"/>
</dbReference>
<dbReference type="GO" id="GO:0052170">
    <property type="term" value="P:symbiont-mediated suppression of host innate immune response"/>
    <property type="evidence" value="ECO:0007669"/>
    <property type="project" value="UniProtKB-KW"/>
</dbReference>
<dbReference type="GO" id="GO:0019062">
    <property type="term" value="P:virion attachment to host cell"/>
    <property type="evidence" value="ECO:0007669"/>
    <property type="project" value="UniProtKB-KW"/>
</dbReference>
<dbReference type="CDD" id="cd12149">
    <property type="entry name" value="Flavi_E_C"/>
    <property type="match status" value="1"/>
</dbReference>
<dbReference type="FunFam" id="1.20.1280.260:FF:000001">
    <property type="entry name" value="Envelope glycoprotein"/>
    <property type="match status" value="1"/>
</dbReference>
<dbReference type="FunFam" id="2.60.40.350:FF:000001">
    <property type="entry name" value="Envelope glycoprotein"/>
    <property type="match status" value="1"/>
</dbReference>
<dbReference type="FunFam" id="2.60.260.50:FF:000001">
    <property type="entry name" value="Genome polyprotein"/>
    <property type="match status" value="1"/>
</dbReference>
<dbReference type="Gene3D" id="1.10.10.930">
    <property type="match status" value="1"/>
</dbReference>
<dbReference type="Gene3D" id="1.20.1280.260">
    <property type="match status" value="1"/>
</dbReference>
<dbReference type="Gene3D" id="2.60.40.350">
    <property type="match status" value="1"/>
</dbReference>
<dbReference type="Gene3D" id="1.10.8.970">
    <property type="entry name" value="Flavivirus envelope glycoprotein M-like"/>
    <property type="match status" value="1"/>
</dbReference>
<dbReference type="Gene3D" id="2.60.260.50">
    <property type="entry name" value="Flavivirus polyprotein propeptide domain"/>
    <property type="match status" value="1"/>
</dbReference>
<dbReference type="Gene3D" id="2.60.98.10">
    <property type="entry name" value="Tick-borne Encephalitis virus Glycoprotein, domain 1"/>
    <property type="match status" value="1"/>
</dbReference>
<dbReference type="Gene3D" id="3.30.67.10">
    <property type="entry name" value="Viral Envelope Glycoprotein, domain 2"/>
    <property type="match status" value="1"/>
</dbReference>
<dbReference type="Gene3D" id="3.30.387.10">
    <property type="entry name" value="Viral Envelope Glycoprotein, domain 3"/>
    <property type="match status" value="1"/>
</dbReference>
<dbReference type="InterPro" id="IPR000069">
    <property type="entry name" value="Env_glycoprot_M_flavivir"/>
</dbReference>
<dbReference type="InterPro" id="IPR038302">
    <property type="entry name" value="Env_glycoprot_M_sf_flavivir"/>
</dbReference>
<dbReference type="InterPro" id="IPR013755">
    <property type="entry name" value="Flav_gly_cen_dom_subdom1"/>
</dbReference>
<dbReference type="InterPro" id="IPR001122">
    <property type="entry name" value="Flavi_capsidC"/>
</dbReference>
<dbReference type="InterPro" id="IPR037172">
    <property type="entry name" value="Flavi_capsidC_sf"/>
</dbReference>
<dbReference type="InterPro" id="IPR027287">
    <property type="entry name" value="Flavi_E_Ig-like"/>
</dbReference>
<dbReference type="InterPro" id="IPR026470">
    <property type="entry name" value="Flavi_E_Stem/Anchor_dom"/>
</dbReference>
<dbReference type="InterPro" id="IPR038345">
    <property type="entry name" value="Flavi_E_Stem/Anchor_dom_sf"/>
</dbReference>
<dbReference type="InterPro" id="IPR011998">
    <property type="entry name" value="Flavi_Glycoprot_E_cen/dimer"/>
</dbReference>
<dbReference type="InterPro" id="IPR001157">
    <property type="entry name" value="Flavi_NS1"/>
</dbReference>
<dbReference type="InterPro" id="IPR002535">
    <property type="entry name" value="Flavi_propep"/>
</dbReference>
<dbReference type="InterPro" id="IPR038688">
    <property type="entry name" value="Flavi_propep_sf"/>
</dbReference>
<dbReference type="InterPro" id="IPR000336">
    <property type="entry name" value="Flavivir/Alphavir_Ig-like_sf"/>
</dbReference>
<dbReference type="InterPro" id="IPR036253">
    <property type="entry name" value="Glycoprot_cen/dimer_sf"/>
</dbReference>
<dbReference type="InterPro" id="IPR038055">
    <property type="entry name" value="Glycoprot_E_dimer_dom"/>
</dbReference>
<dbReference type="InterPro" id="IPR013756">
    <property type="entry name" value="GlyE_cen_dom_subdom2"/>
</dbReference>
<dbReference type="InterPro" id="IPR014756">
    <property type="entry name" value="Ig_E-set"/>
</dbReference>
<dbReference type="NCBIfam" id="TIGR04240">
    <property type="entry name" value="flavi_E_stem"/>
    <property type="match status" value="1"/>
</dbReference>
<dbReference type="Pfam" id="PF01003">
    <property type="entry name" value="Flavi_capsid"/>
    <property type="match status" value="1"/>
</dbReference>
<dbReference type="Pfam" id="PF21659">
    <property type="entry name" value="Flavi_E_stem"/>
    <property type="match status" value="1"/>
</dbReference>
<dbReference type="Pfam" id="PF02832">
    <property type="entry name" value="Flavi_glycop_C"/>
    <property type="match status" value="1"/>
</dbReference>
<dbReference type="Pfam" id="PF00869">
    <property type="entry name" value="Flavi_glycoprot"/>
    <property type="match status" value="1"/>
</dbReference>
<dbReference type="Pfam" id="PF01004">
    <property type="entry name" value="Flavi_M"/>
    <property type="match status" value="1"/>
</dbReference>
<dbReference type="Pfam" id="PF00948">
    <property type="entry name" value="Flavi_NS1"/>
    <property type="match status" value="1"/>
</dbReference>
<dbReference type="Pfam" id="PF01570">
    <property type="entry name" value="Flavi_propep"/>
    <property type="match status" value="1"/>
</dbReference>
<dbReference type="SUPFAM" id="SSF81296">
    <property type="entry name" value="E set domains"/>
    <property type="match status" value="1"/>
</dbReference>
<dbReference type="SUPFAM" id="SSF101257">
    <property type="entry name" value="Flavivirus capsid protein C"/>
    <property type="match status" value="1"/>
</dbReference>
<dbReference type="SUPFAM" id="SSF56983">
    <property type="entry name" value="Viral glycoprotein, central and dimerisation domains"/>
    <property type="match status" value="1"/>
</dbReference>
<organism>
    <name type="scientific">Dengue virus type 2 (strain China/D2-04)</name>
    <name type="common">DENV-2</name>
    <dbReference type="NCBI Taxonomy" id="31636"/>
    <lineage>
        <taxon>Viruses</taxon>
        <taxon>Riboviria</taxon>
        <taxon>Orthornavirae</taxon>
        <taxon>Kitrinoviricota</taxon>
        <taxon>Flasuviricetes</taxon>
        <taxon>Amarillovirales</taxon>
        <taxon>Flaviviridae</taxon>
        <taxon>Orthoflavivirus</taxon>
        <taxon>Orthoflavivirus denguei</taxon>
        <taxon>Dengue virus</taxon>
    </lineage>
</organism>
<organismHost>
    <name type="scientific">Aedimorphus</name>
    <dbReference type="NCBI Taxonomy" id="53540"/>
</organismHost>
<organismHost>
    <name type="scientific">Diceromyia</name>
    <dbReference type="NCBI Taxonomy" id="53539"/>
</organismHost>
<organismHost>
    <name type="scientific">Erythrocebus patas</name>
    <name type="common">Red guenon</name>
    <name type="synonym">Cercopithecus patas</name>
    <dbReference type="NCBI Taxonomy" id="9538"/>
</organismHost>
<organismHost>
    <name type="scientific">Homo sapiens</name>
    <name type="common">Human</name>
    <dbReference type="NCBI Taxonomy" id="9606"/>
</organismHost>
<organismHost>
    <name type="scientific">Stegomyia</name>
    <dbReference type="NCBI Taxonomy" id="53541"/>
</organismHost>
<keyword id="KW-1165">Clathrin-mediated endocytosis of virus by host</keyword>
<keyword id="KW-0165">Cleavage on pair of basic residues</keyword>
<keyword id="KW-1015">Disulfide bond</keyword>
<keyword id="KW-1170">Fusion of virus membrane with host endosomal membrane</keyword>
<keyword id="KW-1168">Fusion of virus membrane with host membrane</keyword>
<keyword id="KW-0325">Glycoprotein</keyword>
<keyword id="KW-1035">Host cytoplasm</keyword>
<keyword id="KW-1038">Host endoplasmic reticulum</keyword>
<keyword id="KW-1043">Host membrane</keyword>
<keyword id="KW-1048">Host nucleus</keyword>
<keyword id="KW-0945">Host-virus interaction</keyword>
<keyword id="KW-1090">Inhibition of host innate immune response by virus</keyword>
<keyword id="KW-0472">Membrane</keyword>
<keyword id="KW-0964">Secreted</keyword>
<keyword id="KW-0941">Suppressor of RNA silencing</keyword>
<keyword id="KW-0812">Transmembrane</keyword>
<keyword id="KW-1133">Transmembrane helix</keyword>
<keyword id="KW-1161">Viral attachment to host cell</keyword>
<keyword id="KW-0261">Viral envelope protein</keyword>
<keyword id="KW-0899">Viral immunoevasion</keyword>
<keyword id="KW-0543">Viral nucleoprotein</keyword>
<keyword id="KW-1162">Viral penetration into host cytoplasm</keyword>
<keyword id="KW-0946">Virion</keyword>
<keyword id="KW-1164">Virus endocytosis by host</keyword>
<keyword id="KW-1160">Virus entry into host cell</keyword>
<keyword id="KW-0862">Zinc</keyword>
<reference key="1">
    <citation type="journal article" date="1991" name="Zhonghua Wei Sheng Wu Xue He Mian Yi Xue Za Zhi">
        <title>The nucleotide and encoded amino acid sequences of the structural protein gene of D2-04 virus strain isolated in China.</title>
        <authorList>
            <person name="Yang P.Y."/>
            <person name="Lam S.K."/>
        </authorList>
    </citation>
    <scope>NUCLEOTIDE SEQUENCE [GENOMIC RNA] OF 1-775</scope>
</reference>
<reference key="2">
    <citation type="journal article" date="1991" name="Zhonghua Wei Sheng Wu Xue He Mian Yi Xue Za Zhi">
        <title>Nucleotide and encoded amino acid sequences of the nonstructural protein NS1 gene of a Dengue-2 virus isolated in China.</title>
        <authorList>
            <person name="Yang P.Y."/>
            <person name="Kautner I.M."/>
            <person name="Koh C.L."/>
            <person name="Lam S.K."/>
        </authorList>
    </citation>
    <scope>NUCLEOTIDE SEQUENCE [GENOMIC RNA] OF 776-1127</scope>
</reference>
<protein>
    <recommendedName>
        <fullName>Genome polyprotein</fullName>
    </recommendedName>
    <component>
        <recommendedName>
            <fullName>Capsid protein C</fullName>
        </recommendedName>
        <alternativeName>
            <fullName>Core protein</fullName>
        </alternativeName>
    </component>
    <component>
        <recommendedName>
            <fullName>Protein prM</fullName>
        </recommendedName>
    </component>
    <component>
        <recommendedName>
            <fullName>Peptide pr</fullName>
        </recommendedName>
    </component>
    <component>
        <recommendedName>
            <fullName>Small envelope protein M</fullName>
        </recommendedName>
        <alternativeName>
            <fullName>Matrix protein</fullName>
        </alternativeName>
    </component>
    <component>
        <recommendedName>
            <fullName>Envelope protein E</fullName>
        </recommendedName>
    </component>
    <component>
        <recommendedName>
            <fullName>Non-structural protein 1</fullName>
            <shortName>NS1</shortName>
        </recommendedName>
    </component>
</protein>
<comment type="function">
    <molecule>Capsid protein C</molecule>
    <text evidence="3">Plays a role in virus budding by binding to the cell membrane and gathering the viral RNA into a nucleocapsid that forms the core of a mature virus particle. During virus entry, may induce genome penetration into the host cytoplasm after hemifusion induced by the surface proteins. Can migrate to the cell nucleus where it modulates host functions. Overcomes the anti-viral effects of host EXOC1 by sequestering and degrading the latter through the proteasome degradation pathway.</text>
</comment>
<comment type="function">
    <molecule>Capsid protein C</molecule>
    <text evidence="1">Inhibits RNA silencing by interfering with host Dicer.</text>
</comment>
<comment type="function">
    <molecule>Peptide pr</molecule>
    <text evidence="3">Prevents premature fusion activity of envelope proteins in trans-Golgi by binding to envelope protein E at pH6.0. After virion release in extracellular space, gets dissociated from E dimers.</text>
</comment>
<comment type="function">
    <molecule>Protein prM</molecule>
    <text evidence="3">Acts as a chaperone for envelope protein E during intracellular virion assembly by masking and inactivating envelope protein E fusion peptide. prM is the only viral peptide matured by host furin in the trans-Golgi network probably to avoid catastrophic activation of the viral fusion activity in acidic GolGi compartment prior to virion release. prM-E cleavage is inefficient, and many virions are only partially matured. These uncleaved prM would play a role in immune evasion.</text>
</comment>
<comment type="function">
    <molecule>Small envelope protein M</molecule>
    <text evidence="3">May play a role in virus budding. Exerts cytotoxic effects by activating a mitochondrial apoptotic pathway through M ectodomain. May display a viroporin activity.</text>
</comment>
<comment type="function">
    <molecule>Envelope protein E</molecule>
    <text evidence="3">Binds to host cell surface receptor and mediates fusion between viral and cellular membranes. Envelope protein is synthesized in the endoplasmic reticulum in the form of heterodimer with protein prM. They play a role in virion budding in the ER, and the newly formed immature particle is covered with 60 spikes composed of heterodimer between precursor prM and envelope protein E. The virion is transported to the Golgi apparatus where the low pH causes dissociation of PrM-E heterodimers and formation of E homodimers. prM-E cleavage is inefficient, and many virions are only partially matured. These uncleaved prM would play a role in immune evasion.</text>
</comment>
<comment type="function">
    <molecule>Non-structural protein 1</molecule>
    <text evidence="5">Involved in immune evasion, pathogenesis and viral replication. Once cleaved off the polyprotein, is targeted to three destinations: the viral replication cycle, the plasma membrane and the extracellular compartment. Essential for viral replication. Required for formation of the replication complex and recruitment of other non-structural proteins to the ER-derived membrane structures. Excreted as a hexameric lipoparticle that plays a role against host immune response. Antagonizing the complement function. Binds to the host macrophages and dendritic cells. Inhibits signal transduction originating from Toll-like receptor 3 (TLR3).</text>
</comment>
<comment type="function">
    <molecule>Non-structural protein 1</molecule>
    <text evidence="3">Disrupts the host endothelial glycocalyx layer of host pulmonary microvascular endothelial cells, inducing degradation of sialic acid and shedding of heparan sulfate proteoglycans. NS1 induces expression of sialidases, heparanase, and activates cathepsin L, which activates heparanase via enzymatic cleavage. These effects are probably linked to the endothelial hyperpermeability observed in severe dengue disease.</text>
</comment>
<comment type="subunit">
    <molecule>Capsid protein C</molecule>
    <text evidence="3">Homodimer. Interacts (via N-terminus) with host EXOC1 (via C-terminus); this interaction results in EXOC1 degradation through the proteasome degradation pathway.</text>
</comment>
<comment type="subunit">
    <molecule>Protein prM</molecule>
    <text evidence="3">Forms heterodimers with envelope protein E in the endoplasmic reticulum and Golgi.</text>
</comment>
<comment type="subunit">
    <molecule>Envelope protein E</molecule>
    <text evidence="3">Homodimer; in the endoplasmic reticulum and Golgi. Interacts with protein prM. Interacts with non-structural protein 1.</text>
</comment>
<comment type="subunit">
    <molecule>Non-structural protein 1</molecule>
    <text evidence="3">Homodimer; Homohexamer when secreted. Interacts with envelope protein E.</text>
</comment>
<comment type="subcellular location">
    <molecule>Capsid protein C</molecule>
    <subcellularLocation>
        <location evidence="3">Virion</location>
    </subcellularLocation>
    <subcellularLocation>
        <location evidence="3">Host nucleus</location>
    </subcellularLocation>
    <subcellularLocation>
        <location evidence="3">Host cytoplasm</location>
    </subcellularLocation>
    <subcellularLocation>
        <location evidence="3">Host cytoplasm</location>
        <location evidence="3">Host perinuclear region</location>
    </subcellularLocation>
</comment>
<comment type="subcellular location">
    <molecule>Peptide pr</molecule>
    <subcellularLocation>
        <location evidence="3">Secreted</location>
    </subcellularLocation>
</comment>
<comment type="subcellular location">
    <molecule>Small envelope protein M</molecule>
    <subcellularLocation>
        <location evidence="3">Virion membrane</location>
        <topology evidence="6">Multi-pass membrane protein</topology>
    </subcellularLocation>
    <subcellularLocation>
        <location evidence="3">Host endoplasmic reticulum membrane</location>
        <topology evidence="6">Multi-pass membrane protein</topology>
    </subcellularLocation>
</comment>
<comment type="subcellular location">
    <molecule>Envelope protein E</molecule>
    <subcellularLocation>
        <location evidence="3">Virion membrane</location>
        <topology evidence="6">Multi-pass membrane protein</topology>
    </subcellularLocation>
    <subcellularLocation>
        <location evidence="3">Host endoplasmic reticulum membrane</location>
        <topology evidence="6">Multi-pass membrane protein</topology>
    </subcellularLocation>
</comment>
<comment type="subcellular location">
    <molecule>Non-structural protein 1</molecule>
    <subcellularLocation>
        <location evidence="3">Secreted</location>
    </subcellularLocation>
    <subcellularLocation>
        <location>Host endoplasmic reticulum membrane</location>
        <topology>Peripheral membrane protein</topology>
        <orientation evidence="3">Lumenal side</orientation>
    </subcellularLocation>
    <text evidence="5">Located in RE-derived vesicles hosting the replication complex.</text>
</comment>
<comment type="domain">
    <text evidence="3">The transmembrane domains of the small envelope protein M and envelope protein E contain an endoplasmic reticulum retention signal.</text>
</comment>
<comment type="PTM">
    <molecule>Genome polyprotein</molecule>
    <text evidence="3">Specific enzymatic cleavages in vivo yield mature proteins. Cleavages in the lumen of endoplasmic reticulum are performed by host signal peptidase, wereas cleavages in the cytoplasmic side are performed by the Serine protease NS3. Signal cleavage at the 2K-4B site requires a prior NS3 protease-mediated cleavage at the 4A-2K site.</text>
</comment>
<comment type="PTM">
    <molecule>Protein prM</molecule>
    <text evidence="3">Cleaved in post-Golgi vesicles by a host furin, releasing the mature small envelope protein M, and peptide pr. This cleavage is incomplete as up to 30% of viral particles still carry uncleaved prM.</text>
</comment>
<comment type="PTM">
    <molecule>Envelope protein E</molecule>
    <text evidence="3">N-glycosylated.</text>
</comment>
<comment type="PTM">
    <molecule>Non-structural protein 1</molecule>
    <text evidence="3">N-glycosylated. The excreted form is glycosylated and this is required for efficient secretion of the protein from infected cells.</text>
</comment>
<feature type="chain" id="PRO_0000405211" description="Genome polyprotein">
    <location>
        <begin position="1"/>
        <end position="1127" status="greater than"/>
    </location>
</feature>
<feature type="chain" id="PRO_0000037917" description="Capsid protein C" evidence="4">
    <location>
        <begin position="1"/>
        <end position="100"/>
    </location>
</feature>
<feature type="propeptide" id="PRO_0000037918" description="ER anchor for the capsid protein C, removed in mature form by serine protease NS3" evidence="4">
    <location>
        <begin position="101"/>
        <end position="114"/>
    </location>
</feature>
<feature type="chain" id="PRO_0000308277" description="Protein prM" evidence="4">
    <location>
        <begin position="115"/>
        <end position="280"/>
    </location>
</feature>
<feature type="chain" id="PRO_0000308278" description="Peptide pr" evidence="4">
    <location>
        <begin position="115"/>
        <end position="205"/>
    </location>
</feature>
<feature type="chain" id="PRO_0000037919" description="Small envelope protein M" evidence="4">
    <location>
        <begin position="206"/>
        <end position="280"/>
    </location>
</feature>
<feature type="chain" id="PRO_0000037920" description="Envelope protein E" evidence="4">
    <location>
        <begin position="281"/>
        <end position="775"/>
    </location>
</feature>
<feature type="chain" id="PRO_0000037921" description="Non-structural protein 1" evidence="4">
    <location>
        <begin position="776"/>
        <end position="1127"/>
    </location>
</feature>
<feature type="topological domain" description="Cytoplasmic" evidence="6">
    <location>
        <begin position="1"/>
        <end position="101"/>
    </location>
</feature>
<feature type="transmembrane region" description="Helical" evidence="6">
    <location>
        <begin position="102"/>
        <end position="122"/>
    </location>
</feature>
<feature type="topological domain" description="Extracellular" evidence="6">
    <location>
        <begin position="123"/>
        <end position="238"/>
    </location>
</feature>
<feature type="transmembrane region" description="Helical" evidence="6">
    <location>
        <begin position="239"/>
        <end position="259"/>
    </location>
</feature>
<feature type="topological domain" description="Cytoplasmic" evidence="6">
    <location>
        <begin position="260"/>
        <end position="265"/>
    </location>
</feature>
<feature type="transmembrane region" description="Helical" evidence="6">
    <location>
        <begin position="266"/>
        <end position="280"/>
    </location>
</feature>
<feature type="topological domain" description="Extracellular" evidence="6">
    <location>
        <begin position="281"/>
        <end position="725"/>
    </location>
</feature>
<feature type="transmembrane region" description="Helical" evidence="6">
    <location>
        <begin position="726"/>
        <end position="746"/>
    </location>
</feature>
<feature type="topological domain" description="Cytoplasmic" evidence="6">
    <location>
        <begin position="747"/>
        <end position="754"/>
    </location>
</feature>
<feature type="transmembrane region" description="Helical" evidence="6">
    <location>
        <begin position="755"/>
        <end position="773"/>
    </location>
</feature>
<feature type="topological domain" description="Extracellular" evidence="6">
    <location>
        <begin position="774"/>
        <end position="1127" status="greater than"/>
    </location>
</feature>
<feature type="region of interest" description="Interaction with host EXOC1" evidence="3">
    <location>
        <begin position="1"/>
        <end position="15"/>
    </location>
</feature>
<feature type="region of interest" description="Hydrophobic; homodimerization of capsid protein C" evidence="4">
    <location>
        <begin position="37"/>
        <end position="72"/>
    </location>
</feature>
<feature type="region of interest" description="Fusion peptide" evidence="2">
    <location>
        <begin position="378"/>
        <end position="391"/>
    </location>
</feature>
<feature type="site" description="Cleavage; by viral protease NS3" evidence="4">
    <location>
        <begin position="100"/>
        <end position="101"/>
    </location>
</feature>
<feature type="site" description="Cleavage; by host signal peptidase" evidence="4">
    <location>
        <begin position="114"/>
        <end position="115"/>
    </location>
</feature>
<feature type="site" description="Cleavage; by host furin" evidence="4 6">
    <location>
        <begin position="205"/>
        <end position="206"/>
    </location>
</feature>
<feature type="site" description="Cleavage; by host signal peptidase" evidence="4">
    <location>
        <begin position="280"/>
        <end position="281"/>
    </location>
</feature>
<feature type="site" description="Cleavage; by host signal peptidase" evidence="4">
    <location>
        <begin position="775"/>
        <end position="776"/>
    </location>
</feature>
<feature type="glycosylation site" description="N-linked (GlcNAc...) asparagine; by host" evidence="6">
    <location>
        <position position="183"/>
    </location>
</feature>
<feature type="glycosylation site" description="N-linked (GlcNAc...) asparagine; by host" evidence="6">
    <location>
        <position position="347"/>
    </location>
</feature>
<feature type="glycosylation site" description="N-linked (GlcNAc...) asparagine; by host" evidence="6">
    <location>
        <position position="433"/>
    </location>
</feature>
<feature type="glycosylation site" description="N-linked (GlcNAc...) asparagine; by host" evidence="6">
    <location>
        <position position="905"/>
    </location>
</feature>
<feature type="glycosylation site" description="N-linked (GlcNAc...) asparagine; by host" evidence="6">
    <location>
        <position position="982"/>
    </location>
</feature>
<feature type="disulfide bond" evidence="3">
    <location>
        <begin position="283"/>
        <end position="310"/>
    </location>
</feature>
<feature type="disulfide bond" evidence="3">
    <location>
        <begin position="340"/>
        <end position="401"/>
    </location>
</feature>
<feature type="disulfide bond" evidence="3">
    <location>
        <begin position="354"/>
        <end position="385"/>
    </location>
</feature>
<feature type="disulfide bond" evidence="3">
    <location>
        <begin position="372"/>
        <end position="396"/>
    </location>
</feature>
<feature type="disulfide bond" evidence="3">
    <location>
        <begin position="465"/>
        <end position="565"/>
    </location>
</feature>
<feature type="disulfide bond" evidence="3">
    <location>
        <begin position="582"/>
        <end position="613"/>
    </location>
</feature>
<feature type="disulfide bond" evidence="3">
    <location>
        <begin position="779"/>
        <end position="790"/>
    </location>
</feature>
<feature type="disulfide bond" evidence="3">
    <location>
        <begin position="830"/>
        <end position="918"/>
    </location>
</feature>
<feature type="disulfide bond" evidence="3">
    <location>
        <begin position="954"/>
        <end position="998"/>
    </location>
</feature>
<feature type="disulfide bond" evidence="3">
    <location>
        <begin position="1055"/>
        <end position="1104"/>
    </location>
</feature>
<feature type="disulfide bond" evidence="3">
    <location>
        <begin position="1066"/>
        <end position="1088"/>
    </location>
</feature>
<feature type="non-terminal residue">
    <location>
        <position position="1127"/>
    </location>
</feature>
<sequence>MNNQRKKARSTPFNMLRRERNRVSTVQQLTKRFSLGMLQGRGPLKLFMALVALPRFLTIPPTAGILKRWGTIKKSKAINDVRGCRKEIGRMLNILNRRRRTAGVIIMLIPTVMAFHLTTRNGEPHMIVSRQEKGKSLLFKTEDGVNMCTLMAIDFGELCEDTITYKCPLLRQNEPEDIDCWCNSTSTWVTYGTRTTTGEHGREKRSVALVPHVGMGLETGTETWMSSDGAWKRACRMETWILRHPGFTIMAAILAYTIGTTHFQRGLILILQTAVAPSMTMRCIGISNRDFVEGVSGGSWVDIVLEHGSCVTTMAKNKPTLDFELIKTEATQPATLRKYCIEAKLTNTTTESRCPTQGEPSLNEEQDKRFVCKHSMVDRGWGNGCGLFGKGGIVTCAMFTCKKNMEGNIVQPENLEYTIVITPHSGEEHAVGNDTGKHGKEIKITPQSSITEAELTGYGTVTMECSPRTGLDFNEIVLLQMEDKAWLVHRQWFLDLPLPWLPGADTQGSNRIQKETLVTFKNPHAKKQDVVVLGSQEGAMHTALTGATEIQMSSGNLLFTGHLKCRLRMDKLQLKGMSYSMCTGKFQIVKEIAETQHGTIVIRVQYEGDGSPCKIPLEIMDLEKRHVLGRLITVNPIVTEKDSPVNIEAEPPFGDSYIIIGVEPGQLKLHWFKKGSSIGQMFETTMRGAKRMAILGDTAWDFGSLGGVFTSIGKALHQVFGAIYGAAFSGVSWTMKILIGVIITWIGMNSRSTSLSVSLVLVGVITLYLGAMVQADSGCVVSWKNKELKCGSGIFITDNVHTWTEQYNFQPESPSKLASAMRKAHEEGICGIRSVTRLENLMWKQITPELKHILSEIEVKLTIMTGDIKGIMQAGTRSLRPQPTELKFSWETWRKAKMVPTEPHNQTFLIDGPETAECPNTNRAWNSLEVEDYGFGVFTTNIWLKLREKEDLCCDSKVMSAASKDNRAVHDDMGYWIESALNDTWKMEKASFIEVKSCHWPKSHTLWINGGLESEMIIPKSFAGPVSQHNYRPGYYTQTAGPRHLGKLEMDFDFCEGTTVVVTEDCGNRGPSLRTTTASGKLITEWCCRSSTIPPLRIKGEDGCWYGMEIRPLKEKEENLVTSLVTA</sequence>
<proteinExistence type="inferred from homology"/>
<accession>P30026</accession>
<accession>Q66450</accession>
<evidence type="ECO:0000250" key="1">
    <source>
        <dbReference type="UniProtKB" id="P03314"/>
    </source>
</evidence>
<evidence type="ECO:0000250" key="2">
    <source>
        <dbReference type="UniProtKB" id="P14336"/>
    </source>
</evidence>
<evidence type="ECO:0000250" key="3">
    <source>
        <dbReference type="UniProtKB" id="P17763"/>
    </source>
</evidence>
<evidence type="ECO:0000250" key="4">
    <source>
        <dbReference type="UniProtKB" id="P29990"/>
    </source>
</evidence>
<evidence type="ECO:0000250" key="5">
    <source>
        <dbReference type="UniProtKB" id="Q9Q6P4"/>
    </source>
</evidence>
<evidence type="ECO:0000255" key="6"/>